<sequence>MMANHLVKPDSRNCKRARELEPQVSDSPQVSSLGKSESSLSEASGLFYKEEALEKDLSDMSKEINLMLSTYAKILSERAAVDASYIDEIDGLFKEANIIENFLVQKREFLKQRFTVITNTLHK</sequence>
<gene>
    <name type="primary">Tex12</name>
</gene>
<keyword id="KW-0158">Chromosome</keyword>
<keyword id="KW-0469">Meiosis</keyword>
<keyword id="KW-1185">Reference proteome</keyword>
<dbReference type="EMBL" id="AF285582">
    <property type="protein sequence ID" value="AAK31961.1"/>
    <property type="molecule type" value="mRNA"/>
</dbReference>
<dbReference type="EMBL" id="AK017776">
    <property type="protein sequence ID" value="BAB30924.1"/>
    <property type="molecule type" value="mRNA"/>
</dbReference>
<dbReference type="EMBL" id="AK006285">
    <property type="protein sequence ID" value="BAB24504.1"/>
    <property type="molecule type" value="mRNA"/>
</dbReference>
<dbReference type="EMBL" id="AK014896">
    <property type="protein sequence ID" value="BAB29611.1"/>
    <property type="molecule type" value="mRNA"/>
</dbReference>
<dbReference type="EMBL" id="BC048458">
    <property type="protein sequence ID" value="AAH48458.1"/>
    <property type="molecule type" value="mRNA"/>
</dbReference>
<dbReference type="EMBL" id="BC061081">
    <property type="protein sequence ID" value="AAH61081.1"/>
    <property type="molecule type" value="mRNA"/>
</dbReference>
<dbReference type="CCDS" id="CCDS40621.1"/>
<dbReference type="RefSeq" id="NP_079963.1">
    <property type="nucleotide sequence ID" value="NM_025687.3"/>
</dbReference>
<dbReference type="SMR" id="Q9CR81"/>
<dbReference type="BioGRID" id="211624">
    <property type="interactions" value="4"/>
</dbReference>
<dbReference type="FunCoup" id="Q9CR81">
    <property type="interactions" value="238"/>
</dbReference>
<dbReference type="STRING" id="10090.ENSMUSP00000149921"/>
<dbReference type="PhosphoSitePlus" id="Q9CR81"/>
<dbReference type="SwissPalm" id="Q9CR81"/>
<dbReference type="PaxDb" id="10090-ENSMUSP00000034568"/>
<dbReference type="ProteomicsDB" id="262875"/>
<dbReference type="Antibodypedia" id="45625">
    <property type="antibodies" value="114 antibodies from 17 providers"/>
</dbReference>
<dbReference type="DNASU" id="66654"/>
<dbReference type="Ensembl" id="ENSMUST00000034568.7">
    <property type="protein sequence ID" value="ENSMUSP00000034568.6"/>
    <property type="gene ID" value="ENSMUSG00000032065.7"/>
</dbReference>
<dbReference type="Ensembl" id="ENSMUST00000217236.2">
    <property type="protein sequence ID" value="ENSMUSP00000149921.2"/>
    <property type="gene ID" value="ENSMUSG00000032065.7"/>
</dbReference>
<dbReference type="GeneID" id="66654"/>
<dbReference type="KEGG" id="mmu:66654"/>
<dbReference type="UCSC" id="uc009pjs.1">
    <property type="organism name" value="mouse"/>
</dbReference>
<dbReference type="AGR" id="MGI:1913904"/>
<dbReference type="CTD" id="56158"/>
<dbReference type="MGI" id="MGI:1913904">
    <property type="gene designation" value="Tex12"/>
</dbReference>
<dbReference type="VEuPathDB" id="HostDB:ENSMUSG00000032065"/>
<dbReference type="eggNOG" id="ENOG502S8K9">
    <property type="taxonomic scope" value="Eukaryota"/>
</dbReference>
<dbReference type="GeneTree" id="ENSGT00390000006602"/>
<dbReference type="HOGENOM" id="CLU_163464_0_0_1"/>
<dbReference type="InParanoid" id="Q9CR81"/>
<dbReference type="OMA" id="RFTMIAN"/>
<dbReference type="OrthoDB" id="6155282at2759"/>
<dbReference type="PhylomeDB" id="Q9CR81"/>
<dbReference type="TreeFam" id="TF330925"/>
<dbReference type="BioGRID-ORCS" id="66654">
    <property type="hits" value="2 hits in 111 CRISPR screens"/>
</dbReference>
<dbReference type="ChiTaRS" id="Tex12">
    <property type="organism name" value="mouse"/>
</dbReference>
<dbReference type="PRO" id="PR:Q9CR81"/>
<dbReference type="Proteomes" id="UP000000589">
    <property type="component" value="Chromosome 9"/>
</dbReference>
<dbReference type="RNAct" id="Q9CR81">
    <property type="molecule type" value="protein"/>
</dbReference>
<dbReference type="Bgee" id="ENSMUSG00000032065">
    <property type="expression patterns" value="Expressed in spermatocyte and 24 other cell types or tissues"/>
</dbReference>
<dbReference type="GO" id="GO:0000801">
    <property type="term" value="C:central element"/>
    <property type="evidence" value="ECO:0000314"/>
    <property type="project" value="UniProtKB"/>
</dbReference>
<dbReference type="GO" id="GO:0005694">
    <property type="term" value="C:chromosome"/>
    <property type="evidence" value="ECO:0000314"/>
    <property type="project" value="UniProtKB"/>
</dbReference>
<dbReference type="GO" id="GO:0005654">
    <property type="term" value="C:nucleoplasm"/>
    <property type="evidence" value="ECO:0000304"/>
    <property type="project" value="Reactome"/>
</dbReference>
<dbReference type="GO" id="GO:0000795">
    <property type="term" value="C:synaptonemal complex"/>
    <property type="evidence" value="ECO:0000314"/>
    <property type="project" value="MGI"/>
</dbReference>
<dbReference type="GO" id="GO:0000711">
    <property type="term" value="P:meiotic DNA repair synthesis"/>
    <property type="evidence" value="ECO:0000315"/>
    <property type="project" value="MGI"/>
</dbReference>
<dbReference type="GO" id="GO:0007130">
    <property type="term" value="P:synaptonemal complex assembly"/>
    <property type="evidence" value="ECO:0000315"/>
    <property type="project" value="MGI"/>
</dbReference>
<dbReference type="InterPro" id="IPR029193">
    <property type="entry name" value="TEX12"/>
</dbReference>
<dbReference type="PANTHER" id="PTHR37349">
    <property type="entry name" value="TESTIS-EXPRESSED PROTEIN 12"/>
    <property type="match status" value="1"/>
</dbReference>
<dbReference type="PANTHER" id="PTHR37349:SF1">
    <property type="entry name" value="TESTIS-EXPRESSED PROTEIN 12"/>
    <property type="match status" value="1"/>
</dbReference>
<dbReference type="Pfam" id="PF15219">
    <property type="entry name" value="TEX12"/>
    <property type="match status" value="1"/>
</dbReference>
<reference key="1">
    <citation type="journal article" date="2001" name="Nat. Genet.">
        <title>An abundance of X-linked genes expressed in spermatogonia.</title>
        <authorList>
            <person name="Wang P.J."/>
            <person name="McCarrey J.R."/>
            <person name="Yang F."/>
            <person name="Page D.C."/>
        </authorList>
    </citation>
    <scope>NUCLEOTIDE SEQUENCE [MRNA]</scope>
    <scope>TISSUE SPECIFICITY</scope>
    <source>
        <tissue>Testis</tissue>
    </source>
</reference>
<reference key="2">
    <citation type="journal article" date="2005" name="Science">
        <title>The transcriptional landscape of the mammalian genome.</title>
        <authorList>
            <person name="Carninci P."/>
            <person name="Kasukawa T."/>
            <person name="Katayama S."/>
            <person name="Gough J."/>
            <person name="Frith M.C."/>
            <person name="Maeda N."/>
            <person name="Oyama R."/>
            <person name="Ravasi T."/>
            <person name="Lenhard B."/>
            <person name="Wells C."/>
            <person name="Kodzius R."/>
            <person name="Shimokawa K."/>
            <person name="Bajic V.B."/>
            <person name="Brenner S.E."/>
            <person name="Batalov S."/>
            <person name="Forrest A.R."/>
            <person name="Zavolan M."/>
            <person name="Davis M.J."/>
            <person name="Wilming L.G."/>
            <person name="Aidinis V."/>
            <person name="Allen J.E."/>
            <person name="Ambesi-Impiombato A."/>
            <person name="Apweiler R."/>
            <person name="Aturaliya R.N."/>
            <person name="Bailey T.L."/>
            <person name="Bansal M."/>
            <person name="Baxter L."/>
            <person name="Beisel K.W."/>
            <person name="Bersano T."/>
            <person name="Bono H."/>
            <person name="Chalk A.M."/>
            <person name="Chiu K.P."/>
            <person name="Choudhary V."/>
            <person name="Christoffels A."/>
            <person name="Clutterbuck D.R."/>
            <person name="Crowe M.L."/>
            <person name="Dalla E."/>
            <person name="Dalrymple B.P."/>
            <person name="de Bono B."/>
            <person name="Della Gatta G."/>
            <person name="di Bernardo D."/>
            <person name="Down T."/>
            <person name="Engstrom P."/>
            <person name="Fagiolini M."/>
            <person name="Faulkner G."/>
            <person name="Fletcher C.F."/>
            <person name="Fukushima T."/>
            <person name="Furuno M."/>
            <person name="Futaki S."/>
            <person name="Gariboldi M."/>
            <person name="Georgii-Hemming P."/>
            <person name="Gingeras T.R."/>
            <person name="Gojobori T."/>
            <person name="Green R.E."/>
            <person name="Gustincich S."/>
            <person name="Harbers M."/>
            <person name="Hayashi Y."/>
            <person name="Hensch T.K."/>
            <person name="Hirokawa N."/>
            <person name="Hill D."/>
            <person name="Huminiecki L."/>
            <person name="Iacono M."/>
            <person name="Ikeo K."/>
            <person name="Iwama A."/>
            <person name="Ishikawa T."/>
            <person name="Jakt M."/>
            <person name="Kanapin A."/>
            <person name="Katoh M."/>
            <person name="Kawasawa Y."/>
            <person name="Kelso J."/>
            <person name="Kitamura H."/>
            <person name="Kitano H."/>
            <person name="Kollias G."/>
            <person name="Krishnan S.P."/>
            <person name="Kruger A."/>
            <person name="Kummerfeld S.K."/>
            <person name="Kurochkin I.V."/>
            <person name="Lareau L.F."/>
            <person name="Lazarevic D."/>
            <person name="Lipovich L."/>
            <person name="Liu J."/>
            <person name="Liuni S."/>
            <person name="McWilliam S."/>
            <person name="Madan Babu M."/>
            <person name="Madera M."/>
            <person name="Marchionni L."/>
            <person name="Matsuda H."/>
            <person name="Matsuzawa S."/>
            <person name="Miki H."/>
            <person name="Mignone F."/>
            <person name="Miyake S."/>
            <person name="Morris K."/>
            <person name="Mottagui-Tabar S."/>
            <person name="Mulder N."/>
            <person name="Nakano N."/>
            <person name="Nakauchi H."/>
            <person name="Ng P."/>
            <person name="Nilsson R."/>
            <person name="Nishiguchi S."/>
            <person name="Nishikawa S."/>
            <person name="Nori F."/>
            <person name="Ohara O."/>
            <person name="Okazaki Y."/>
            <person name="Orlando V."/>
            <person name="Pang K.C."/>
            <person name="Pavan W.J."/>
            <person name="Pavesi G."/>
            <person name="Pesole G."/>
            <person name="Petrovsky N."/>
            <person name="Piazza S."/>
            <person name="Reed J."/>
            <person name="Reid J.F."/>
            <person name="Ring B.Z."/>
            <person name="Ringwald M."/>
            <person name="Rost B."/>
            <person name="Ruan Y."/>
            <person name="Salzberg S.L."/>
            <person name="Sandelin A."/>
            <person name="Schneider C."/>
            <person name="Schoenbach C."/>
            <person name="Sekiguchi K."/>
            <person name="Semple C.A."/>
            <person name="Seno S."/>
            <person name="Sessa L."/>
            <person name="Sheng Y."/>
            <person name="Shibata Y."/>
            <person name="Shimada H."/>
            <person name="Shimada K."/>
            <person name="Silva D."/>
            <person name="Sinclair B."/>
            <person name="Sperling S."/>
            <person name="Stupka E."/>
            <person name="Sugiura K."/>
            <person name="Sultana R."/>
            <person name="Takenaka Y."/>
            <person name="Taki K."/>
            <person name="Tammoja K."/>
            <person name="Tan S.L."/>
            <person name="Tang S."/>
            <person name="Taylor M.S."/>
            <person name="Tegner J."/>
            <person name="Teichmann S.A."/>
            <person name="Ueda H.R."/>
            <person name="van Nimwegen E."/>
            <person name="Verardo R."/>
            <person name="Wei C.L."/>
            <person name="Yagi K."/>
            <person name="Yamanishi H."/>
            <person name="Zabarovsky E."/>
            <person name="Zhu S."/>
            <person name="Zimmer A."/>
            <person name="Hide W."/>
            <person name="Bult C."/>
            <person name="Grimmond S.M."/>
            <person name="Teasdale R.D."/>
            <person name="Liu E.T."/>
            <person name="Brusic V."/>
            <person name="Quackenbush J."/>
            <person name="Wahlestedt C."/>
            <person name="Mattick J.S."/>
            <person name="Hume D.A."/>
            <person name="Kai C."/>
            <person name="Sasaki D."/>
            <person name="Tomaru Y."/>
            <person name="Fukuda S."/>
            <person name="Kanamori-Katayama M."/>
            <person name="Suzuki M."/>
            <person name="Aoki J."/>
            <person name="Arakawa T."/>
            <person name="Iida J."/>
            <person name="Imamura K."/>
            <person name="Itoh M."/>
            <person name="Kato T."/>
            <person name="Kawaji H."/>
            <person name="Kawagashira N."/>
            <person name="Kawashima T."/>
            <person name="Kojima M."/>
            <person name="Kondo S."/>
            <person name="Konno H."/>
            <person name="Nakano K."/>
            <person name="Ninomiya N."/>
            <person name="Nishio T."/>
            <person name="Okada M."/>
            <person name="Plessy C."/>
            <person name="Shibata K."/>
            <person name="Shiraki T."/>
            <person name="Suzuki S."/>
            <person name="Tagami M."/>
            <person name="Waki K."/>
            <person name="Watahiki A."/>
            <person name="Okamura-Oho Y."/>
            <person name="Suzuki H."/>
            <person name="Kawai J."/>
            <person name="Hayashizaki Y."/>
        </authorList>
    </citation>
    <scope>NUCLEOTIDE SEQUENCE [LARGE SCALE MRNA]</scope>
    <source>
        <strain>C57BL/6J</strain>
        <tissue>Embryo</tissue>
        <tissue>Testis</tissue>
    </source>
</reference>
<reference key="3">
    <citation type="journal article" date="2004" name="Genome Res.">
        <title>The status, quality, and expansion of the NIH full-length cDNA project: the Mammalian Gene Collection (MGC).</title>
        <authorList>
            <consortium name="The MGC Project Team"/>
        </authorList>
    </citation>
    <scope>NUCLEOTIDE SEQUENCE [LARGE SCALE MRNA]</scope>
    <source>
        <tissue>Testis</tissue>
    </source>
</reference>
<reference key="4">
    <citation type="journal article" date="2010" name="Cell">
        <title>A tissue-specific atlas of mouse protein phosphorylation and expression.</title>
        <authorList>
            <person name="Huttlin E.L."/>
            <person name="Jedrychowski M.P."/>
            <person name="Elias J.E."/>
            <person name="Goswami T."/>
            <person name="Rad R."/>
            <person name="Beausoleil S.A."/>
            <person name="Villen J."/>
            <person name="Haas W."/>
            <person name="Sowa M.E."/>
            <person name="Gygi S.P."/>
        </authorList>
    </citation>
    <scope>IDENTIFICATION BY MASS SPECTROMETRY [LARGE SCALE ANALYSIS]</scope>
    <source>
        <tissue>Testis</tissue>
    </source>
</reference>
<reference key="5">
    <citation type="journal article" date="2006" name="J. Cell Sci.">
        <title>Characterization of a novel meiosis-specific protein within the central element of the synaptonemal complex.</title>
        <authorList>
            <person name="Hamer G."/>
            <person name="Gell K."/>
            <person name="Kouznetsova A."/>
            <person name="Novak I."/>
            <person name="Benavente R."/>
            <person name="Hoeoeg C."/>
        </authorList>
    </citation>
    <scope>FUNCTION</scope>
    <scope>SUBCELLULAR LOCATION</scope>
    <scope>TISSUE SPECIFICITY</scope>
    <scope>INTERACTION WITH SYCE2</scope>
</reference>
<reference key="6">
    <citation type="journal article" date="2019" name="Nucleic Acids Res.">
        <title>SCRE serves as a unique synaptonemal complex fastener and is essential for progression of meiosis prophase I in mice.</title>
        <authorList>
            <person name="Liu H."/>
            <person name="Huang T."/>
            <person name="Li M."/>
            <person name="Li M."/>
            <person name="Zhang C."/>
            <person name="Jiang J."/>
            <person name="Yu X."/>
            <person name="Yin Y."/>
            <person name="Zhang F."/>
            <person name="Lu G."/>
            <person name="Luo M.C."/>
            <person name="Zhang L.R."/>
            <person name="Li J."/>
            <person name="Liu K."/>
            <person name="Chen Z.J."/>
        </authorList>
    </citation>
    <scope>SUBCELLULAR LOCATION</scope>
</reference>
<accession>Q9CR81</accession>
<organism>
    <name type="scientific">Mus musculus</name>
    <name type="common">Mouse</name>
    <dbReference type="NCBI Taxonomy" id="10090"/>
    <lineage>
        <taxon>Eukaryota</taxon>
        <taxon>Metazoa</taxon>
        <taxon>Chordata</taxon>
        <taxon>Craniata</taxon>
        <taxon>Vertebrata</taxon>
        <taxon>Euteleostomi</taxon>
        <taxon>Mammalia</taxon>
        <taxon>Eutheria</taxon>
        <taxon>Euarchontoglires</taxon>
        <taxon>Glires</taxon>
        <taxon>Rodentia</taxon>
        <taxon>Myomorpha</taxon>
        <taxon>Muroidea</taxon>
        <taxon>Muridae</taxon>
        <taxon>Murinae</taxon>
        <taxon>Mus</taxon>
        <taxon>Mus</taxon>
    </lineage>
</organism>
<comment type="function">
    <text evidence="3">Component of the transverse central element of synaptonemal complexes (SCS), formed between homologous chromosomes during meiotic prophase (PubMed:16968740). Requires SYCP1 in order to be incorporated into the central element (PubMed:16968740).</text>
</comment>
<comment type="subunit">
    <text evidence="3">Interacts with SYCE2.</text>
</comment>
<comment type="subcellular location">
    <subcellularLocation>
        <location evidence="3 4">Chromosome</location>
    </subcellularLocation>
    <text evidence="3">In prophase I stage of meiosis, localizes in the transverse central elements of the central region between lateral elements of the synaptonemal complexes. Found only where the chromosome cores are synapsed.</text>
</comment>
<comment type="tissue specificity">
    <text evidence="2 3">Testis (at protein level) (PubMed:11279525, PubMed:16968740). Detected in ovary (PubMed:16968740). Expressed in both male and female germ cells (PubMed:16968740).</text>
</comment>
<feature type="chain" id="PRO_0000072494" description="Testis-expressed protein 12">
    <location>
        <begin position="1"/>
        <end position="123"/>
    </location>
</feature>
<feature type="region of interest" description="Disordered" evidence="1">
    <location>
        <begin position="1"/>
        <end position="41"/>
    </location>
</feature>
<feature type="compositionally biased region" description="Basic and acidic residues" evidence="1">
    <location>
        <begin position="7"/>
        <end position="21"/>
    </location>
</feature>
<feature type="compositionally biased region" description="Low complexity" evidence="1">
    <location>
        <begin position="31"/>
        <end position="41"/>
    </location>
</feature>
<protein>
    <recommendedName>
        <fullName>Testis-expressed protein 12</fullName>
    </recommendedName>
</protein>
<evidence type="ECO:0000256" key="1">
    <source>
        <dbReference type="SAM" id="MobiDB-lite"/>
    </source>
</evidence>
<evidence type="ECO:0000269" key="2">
    <source>
    </source>
</evidence>
<evidence type="ECO:0000269" key="3">
    <source>
    </source>
</evidence>
<evidence type="ECO:0000269" key="4">
    <source>
    </source>
</evidence>
<proteinExistence type="evidence at protein level"/>
<name>TEX12_MOUSE</name>